<protein>
    <recommendedName>
        <fullName>Cytochrome c</fullName>
    </recommendedName>
</protein>
<organism>
    <name type="scientific">Saimiri sciureus</name>
    <name type="common">Common squirrel monkey</name>
    <dbReference type="NCBI Taxonomy" id="9521"/>
    <lineage>
        <taxon>Eukaryota</taxon>
        <taxon>Metazoa</taxon>
        <taxon>Chordata</taxon>
        <taxon>Craniata</taxon>
        <taxon>Vertebrata</taxon>
        <taxon>Euteleostomi</taxon>
        <taxon>Mammalia</taxon>
        <taxon>Eutheria</taxon>
        <taxon>Euarchontoglires</taxon>
        <taxon>Primates</taxon>
        <taxon>Haplorrhini</taxon>
        <taxon>Platyrrhini</taxon>
        <taxon>Cebidae</taxon>
        <taxon>Saimiriinae</taxon>
        <taxon>Saimiri</taxon>
    </lineage>
</organism>
<evidence type="ECO:0000250" key="1"/>
<evidence type="ECO:0000250" key="2">
    <source>
        <dbReference type="UniProtKB" id="P62894"/>
    </source>
</evidence>
<evidence type="ECO:0000250" key="3">
    <source>
        <dbReference type="UniProtKB" id="P62897"/>
    </source>
</evidence>
<evidence type="ECO:0000255" key="4">
    <source>
        <dbReference type="PROSITE-ProRule" id="PRU00433"/>
    </source>
</evidence>
<evidence type="ECO:0000305" key="5"/>
<dbReference type="EMBL" id="AY918493">
    <property type="protein sequence ID" value="AAY17032.1"/>
    <property type="molecule type" value="Genomic_DNA"/>
</dbReference>
<dbReference type="SMR" id="Q52V10"/>
<dbReference type="GO" id="GO:0005758">
    <property type="term" value="C:mitochondrial intermembrane space"/>
    <property type="evidence" value="ECO:0007669"/>
    <property type="project" value="UniProtKB-SubCell"/>
</dbReference>
<dbReference type="GO" id="GO:0009055">
    <property type="term" value="F:electron transfer activity"/>
    <property type="evidence" value="ECO:0007669"/>
    <property type="project" value="InterPro"/>
</dbReference>
<dbReference type="GO" id="GO:0020037">
    <property type="term" value="F:heme binding"/>
    <property type="evidence" value="ECO:0007669"/>
    <property type="project" value="InterPro"/>
</dbReference>
<dbReference type="GO" id="GO:0046872">
    <property type="term" value="F:metal ion binding"/>
    <property type="evidence" value="ECO:0007669"/>
    <property type="project" value="UniProtKB-KW"/>
</dbReference>
<dbReference type="GO" id="GO:0006915">
    <property type="term" value="P:apoptotic process"/>
    <property type="evidence" value="ECO:0007669"/>
    <property type="project" value="UniProtKB-KW"/>
</dbReference>
<dbReference type="FunFam" id="1.10.760.10:FF:000008">
    <property type="entry name" value="Cytochrome c"/>
    <property type="match status" value="1"/>
</dbReference>
<dbReference type="Gene3D" id="1.10.760.10">
    <property type="entry name" value="Cytochrome c-like domain"/>
    <property type="match status" value="1"/>
</dbReference>
<dbReference type="InterPro" id="IPR009056">
    <property type="entry name" value="Cyt_c-like_dom"/>
</dbReference>
<dbReference type="InterPro" id="IPR036909">
    <property type="entry name" value="Cyt_c-like_dom_sf"/>
</dbReference>
<dbReference type="InterPro" id="IPR002327">
    <property type="entry name" value="Cyt_c_1A/1B"/>
</dbReference>
<dbReference type="PANTHER" id="PTHR11961">
    <property type="entry name" value="CYTOCHROME C"/>
    <property type="match status" value="1"/>
</dbReference>
<dbReference type="Pfam" id="PF00034">
    <property type="entry name" value="Cytochrom_C"/>
    <property type="match status" value="1"/>
</dbReference>
<dbReference type="PRINTS" id="PR00604">
    <property type="entry name" value="CYTCHRMECIAB"/>
</dbReference>
<dbReference type="SUPFAM" id="SSF46626">
    <property type="entry name" value="Cytochrome c"/>
    <property type="match status" value="1"/>
</dbReference>
<dbReference type="PROSITE" id="PS51007">
    <property type="entry name" value="CYTC"/>
    <property type="match status" value="1"/>
</dbReference>
<gene>
    <name type="primary">CYCS</name>
</gene>
<proteinExistence type="inferred from homology"/>
<accession>Q52V10</accession>
<feature type="initiator methionine" description="Removed" evidence="2">
    <location>
        <position position="1"/>
    </location>
</feature>
<feature type="chain" id="PRO_0000108233" description="Cytochrome c">
    <location>
        <begin position="2"/>
        <end position="105"/>
    </location>
</feature>
<feature type="binding site" description="covalent" evidence="4">
    <location>
        <position position="15"/>
    </location>
    <ligand>
        <name>heme c</name>
        <dbReference type="ChEBI" id="CHEBI:61717"/>
    </ligand>
</feature>
<feature type="binding site" description="covalent" evidence="4">
    <location>
        <position position="18"/>
    </location>
    <ligand>
        <name>heme c</name>
        <dbReference type="ChEBI" id="CHEBI:61717"/>
    </ligand>
</feature>
<feature type="binding site" description="axial binding residue" evidence="4">
    <location>
        <position position="19"/>
    </location>
    <ligand>
        <name>heme c</name>
        <dbReference type="ChEBI" id="CHEBI:61717"/>
    </ligand>
    <ligandPart>
        <name>Fe</name>
        <dbReference type="ChEBI" id="CHEBI:18248"/>
    </ligandPart>
</feature>
<feature type="binding site" description="axial binding residue" evidence="4">
    <location>
        <position position="81"/>
    </location>
    <ligand>
        <name>heme c</name>
        <dbReference type="ChEBI" id="CHEBI:61717"/>
    </ligand>
    <ligandPart>
        <name>Fe</name>
        <dbReference type="ChEBI" id="CHEBI:18248"/>
    </ligandPart>
</feature>
<feature type="modified residue" description="N-acetylglycine" evidence="2">
    <location>
        <position position="2"/>
    </location>
</feature>
<feature type="modified residue" description="Phosphotyrosine" evidence="2">
    <location>
        <position position="49"/>
    </location>
</feature>
<feature type="modified residue" description="N6-succinyllysine" evidence="3">
    <location>
        <position position="56"/>
    </location>
</feature>
<feature type="modified residue" description="N6-acetyllysine; alternate" evidence="3">
    <location>
        <position position="73"/>
    </location>
</feature>
<feature type="modified residue" description="N6-succinyllysine; alternate" evidence="3">
    <location>
        <position position="73"/>
    </location>
</feature>
<feature type="modified residue" description="Phosphotyrosine" evidence="2">
    <location>
        <position position="98"/>
    </location>
</feature>
<feature type="modified residue" description="N6-acetyllysine" evidence="3">
    <location>
        <position position="100"/>
    </location>
</feature>
<reference key="1">
    <citation type="journal article" date="2005" name="Proc. Natl. Acad. Sci. U.S.A.">
        <title>Rapid electrostatic evolution at the binding site for cytochrome c on cytochrome c oxidase in anthropoid primates.</title>
        <authorList>
            <person name="Schmidt T.R."/>
            <person name="Wildman D.E."/>
            <person name="Uddin M."/>
            <person name="Opazo J.C."/>
            <person name="Goodman M."/>
            <person name="Grossman L.I."/>
        </authorList>
    </citation>
    <scope>NUCLEOTIDE SEQUENCE [GENOMIC DNA]</scope>
</reference>
<sequence>MGDVEKGKRIFIQKCSQCHTVEKGGKHKTGPNLHGLFGRKTGQAAGFTYTEANKNKGIIWGEDTLMEYLENPKKYIPGTKMIFVGIKKKGEREDLIAYLKKATNE</sequence>
<comment type="function">
    <text evidence="1">Electron carrier protein. The oxidized form of the cytochrome c heme group can accept an electron from the heme group of the cytochrome c1 subunit of cytochrome reductase. Cytochrome c then transfers this electron to the cytochrome oxidase complex, the final protein carrier in the mitochondrial electron-transport chain (By similarity).</text>
</comment>
<comment type="function">
    <text evidence="1">Plays a role in apoptosis. Suppression of the anti-apoptotic members or activation of the pro-apoptotic members of the Bcl-2 family leads to altered mitochondrial membrane permeability resulting in release of cytochrome c into the cytosol. Binding of cytochrome c to Apaf-1 triggers the activation of caspase-9, which then accelerates apoptosis by activating other caspases (By similarity).</text>
</comment>
<comment type="subcellular location">
    <subcellularLocation>
        <location evidence="1">Mitochondrion intermembrane space</location>
    </subcellularLocation>
    <text evidence="1">Loosely associated with the inner membrane.</text>
</comment>
<comment type="PTM">
    <text evidence="1">Binds 1 heme c group covalently per subunit.</text>
</comment>
<comment type="PTM">
    <text evidence="1">Phosphorylation at Tyr-49 and Tyr-98 both reduce by half the turnover in the reaction with cytochrome c oxidase, down-regulating mitochondrial respiration.</text>
</comment>
<comment type="similarity">
    <text evidence="5">Belongs to the cytochrome c family.</text>
</comment>
<comment type="online information" name="Protein Spotlight">
    <link uri="https://www.proteinspotlight.org/back_issues/076"/>
    <text>Life shuttle - Issue 76 of November 2006</text>
</comment>
<name>CYC_SAISC</name>
<keyword id="KW-0007">Acetylation</keyword>
<keyword id="KW-0053">Apoptosis</keyword>
<keyword id="KW-0249">Electron transport</keyword>
<keyword id="KW-0349">Heme</keyword>
<keyword id="KW-0408">Iron</keyword>
<keyword id="KW-0479">Metal-binding</keyword>
<keyword id="KW-0496">Mitochondrion</keyword>
<keyword id="KW-0597">Phosphoprotein</keyword>
<keyword id="KW-0679">Respiratory chain</keyword>
<keyword id="KW-0813">Transport</keyword>